<evidence type="ECO:0000250" key="1"/>
<evidence type="ECO:0000255" key="2">
    <source>
        <dbReference type="PROSITE-ProRule" id="PRU01210"/>
    </source>
</evidence>
<evidence type="ECO:0000305" key="3"/>
<name>SCX24_TITDI</name>
<organism>
    <name type="scientific">Tityus discrepans</name>
    <name type="common">Venezuelan scorpion</name>
    <dbReference type="NCBI Taxonomy" id="57059"/>
    <lineage>
        <taxon>Eukaryota</taxon>
        <taxon>Metazoa</taxon>
        <taxon>Ecdysozoa</taxon>
        <taxon>Arthropoda</taxon>
        <taxon>Chelicerata</taxon>
        <taxon>Arachnida</taxon>
        <taxon>Scorpiones</taxon>
        <taxon>Buthida</taxon>
        <taxon>Buthoidea</taxon>
        <taxon>Buthidae</taxon>
        <taxon>Tityus</taxon>
    </lineage>
</organism>
<accession>P60263</accession>
<comment type="function">
    <text evidence="1">Beta toxins bind voltage-independently at site-4 of sodium channels (Nav) and shift the voltage of activation toward more negative potentials thereby affecting sodium channel activation and promoting spontaneous and repetitive firing (By similarity). This toxin is active against mammals and also affects neuromuscular preparations of frog.</text>
</comment>
<comment type="subcellular location">
    <subcellularLocation>
        <location>Secreted</location>
    </subcellularLocation>
</comment>
<comment type="tissue specificity">
    <text>Expressed by the venom gland.</text>
</comment>
<comment type="domain">
    <text evidence="3">Has the structural arrangement of an alpha-helix connected to antiparallel beta-sheets by disulfide bonds (CS-alpha/beta).</text>
</comment>
<comment type="similarity">
    <text evidence="3">Belongs to the long (4 C-C) scorpion toxin superfamily. Sodium channel inhibitor family. Beta subfamily.</text>
</comment>
<sequence>KDGYLMEPNGCKLGCLTRPAKYCWXEE</sequence>
<feature type="chain" id="PRO_0000066823" description="Toxin TdII-4">
    <location>
        <begin position="1"/>
        <end position="27" status="greater than"/>
    </location>
</feature>
<feature type="domain" description="LCN-type CS-alpha/beta" evidence="2">
    <location>
        <begin position="1"/>
        <end position="27" status="greater than"/>
    </location>
</feature>
<feature type="non-terminal residue">
    <location>
        <position position="27"/>
    </location>
</feature>
<proteinExistence type="evidence at protein level"/>
<dbReference type="GO" id="GO:0005576">
    <property type="term" value="C:extracellular region"/>
    <property type="evidence" value="ECO:0007669"/>
    <property type="project" value="UniProtKB-SubCell"/>
</dbReference>
<dbReference type="GO" id="GO:0008200">
    <property type="term" value="F:ion channel inhibitor activity"/>
    <property type="evidence" value="ECO:0007669"/>
    <property type="project" value="InterPro"/>
</dbReference>
<dbReference type="GO" id="GO:0017080">
    <property type="term" value="F:sodium channel regulator activity"/>
    <property type="evidence" value="ECO:0007669"/>
    <property type="project" value="UniProtKB-KW"/>
</dbReference>
<dbReference type="GO" id="GO:0090729">
    <property type="term" value="F:toxin activity"/>
    <property type="evidence" value="ECO:0007669"/>
    <property type="project" value="UniProtKB-KW"/>
</dbReference>
<dbReference type="Gene3D" id="3.30.30.10">
    <property type="entry name" value="Knottin, scorpion toxin-like"/>
    <property type="match status" value="1"/>
</dbReference>
<dbReference type="InterPro" id="IPR044062">
    <property type="entry name" value="LCN-type_CS_alpha_beta_dom"/>
</dbReference>
<dbReference type="InterPro" id="IPR036574">
    <property type="entry name" value="Scorpion_toxin-like_sf"/>
</dbReference>
<dbReference type="SUPFAM" id="SSF57095">
    <property type="entry name" value="Scorpion toxin-like"/>
    <property type="match status" value="1"/>
</dbReference>
<dbReference type="PROSITE" id="PS51863">
    <property type="entry name" value="LCN_CSAB"/>
    <property type="match status" value="1"/>
</dbReference>
<protein>
    <recommendedName>
        <fullName>Toxin TdII-4</fullName>
    </recommendedName>
</protein>
<keyword id="KW-0903">Direct protein sequencing</keyword>
<keyword id="KW-0872">Ion channel impairing toxin</keyword>
<keyword id="KW-0528">Neurotoxin</keyword>
<keyword id="KW-0964">Secreted</keyword>
<keyword id="KW-0800">Toxin</keyword>
<keyword id="KW-0738">Voltage-gated sodium channel impairing toxin</keyword>
<reference key="1">
    <citation type="journal article" date="1996" name="Toxicon">
        <title>High performance liquid chromatography purification and amino acid sequence of toxins from the muscarinic fraction of Tityus discrepans scorpion venom.</title>
        <authorList>
            <person name="D'Suze G."/>
            <person name="Corona F."/>
            <person name="Possani L.D."/>
            <person name="Sevcik C."/>
        </authorList>
    </citation>
    <scope>PROTEIN SEQUENCE</scope>
    <source>
        <tissue>Venom</tissue>
    </source>
</reference>